<keyword id="KW-0687">Ribonucleoprotein</keyword>
<keyword id="KW-0689">Ribosomal protein</keyword>
<keyword id="KW-0694">RNA-binding</keyword>
<keyword id="KW-0699">rRNA-binding</keyword>
<reference key="1">
    <citation type="submission" date="2007-06" db="EMBL/GenBank/DDBJ databases">
        <authorList>
            <person name="Dodson R.J."/>
            <person name="Harkins D."/>
            <person name="Paulsen I.T."/>
        </authorList>
    </citation>
    <scope>NUCLEOTIDE SEQUENCE [LARGE SCALE GENOMIC DNA]</scope>
    <source>
        <strain>DSM 24068 / PA7</strain>
    </source>
</reference>
<protein>
    <recommendedName>
        <fullName evidence="1">Small ribosomal subunit protein bS20</fullName>
    </recommendedName>
    <alternativeName>
        <fullName evidence="3">30S ribosomal protein S20</fullName>
    </alternativeName>
</protein>
<evidence type="ECO:0000255" key="1">
    <source>
        <dbReference type="HAMAP-Rule" id="MF_00500"/>
    </source>
</evidence>
<evidence type="ECO:0000256" key="2">
    <source>
        <dbReference type="SAM" id="MobiDB-lite"/>
    </source>
</evidence>
<evidence type="ECO:0000305" key="3"/>
<sequence>MANTPSAKKRAKQAEKRRSHNASLRSMVRTYIKNVVKAIDAKDLAKAQAAFTAAVPVIDRMADKGIIHKNKAARHKSRLSGHIKALSTAAA</sequence>
<feature type="chain" id="PRO_1000014630" description="Small ribosomal subunit protein bS20">
    <location>
        <begin position="1"/>
        <end position="91"/>
    </location>
</feature>
<feature type="region of interest" description="Disordered" evidence="2">
    <location>
        <begin position="1"/>
        <end position="23"/>
    </location>
</feature>
<feature type="compositionally biased region" description="Basic residues" evidence="2">
    <location>
        <begin position="7"/>
        <end position="20"/>
    </location>
</feature>
<gene>
    <name evidence="1" type="primary">rpsT</name>
    <name type="ordered locus">PSPA7_5203</name>
</gene>
<proteinExistence type="inferred from homology"/>
<accession>A6VBV0</accession>
<organism>
    <name type="scientific">Pseudomonas paraeruginosa (strain DSM 24068 / PA7)</name>
    <name type="common">Pseudomonas aeruginosa (strain PA7)</name>
    <dbReference type="NCBI Taxonomy" id="381754"/>
    <lineage>
        <taxon>Bacteria</taxon>
        <taxon>Pseudomonadati</taxon>
        <taxon>Pseudomonadota</taxon>
        <taxon>Gammaproteobacteria</taxon>
        <taxon>Pseudomonadales</taxon>
        <taxon>Pseudomonadaceae</taxon>
        <taxon>Pseudomonas</taxon>
        <taxon>Pseudomonas paraeruginosa</taxon>
    </lineage>
</organism>
<name>RS20_PSEP7</name>
<comment type="function">
    <text evidence="1">Binds directly to 16S ribosomal RNA.</text>
</comment>
<comment type="similarity">
    <text evidence="1">Belongs to the bacterial ribosomal protein bS20 family.</text>
</comment>
<dbReference type="EMBL" id="CP000744">
    <property type="protein sequence ID" value="ABR81226.1"/>
    <property type="molecule type" value="Genomic_DNA"/>
</dbReference>
<dbReference type="RefSeq" id="WP_003150004.1">
    <property type="nucleotide sequence ID" value="NC_009656.1"/>
</dbReference>
<dbReference type="SMR" id="A6VBV0"/>
<dbReference type="GeneID" id="77223070"/>
<dbReference type="KEGG" id="pap:PSPA7_5203"/>
<dbReference type="HOGENOM" id="CLU_160655_4_0_6"/>
<dbReference type="Proteomes" id="UP000001582">
    <property type="component" value="Chromosome"/>
</dbReference>
<dbReference type="GO" id="GO:0005829">
    <property type="term" value="C:cytosol"/>
    <property type="evidence" value="ECO:0007669"/>
    <property type="project" value="TreeGrafter"/>
</dbReference>
<dbReference type="GO" id="GO:0015935">
    <property type="term" value="C:small ribosomal subunit"/>
    <property type="evidence" value="ECO:0007669"/>
    <property type="project" value="TreeGrafter"/>
</dbReference>
<dbReference type="GO" id="GO:0070181">
    <property type="term" value="F:small ribosomal subunit rRNA binding"/>
    <property type="evidence" value="ECO:0007669"/>
    <property type="project" value="TreeGrafter"/>
</dbReference>
<dbReference type="GO" id="GO:0003735">
    <property type="term" value="F:structural constituent of ribosome"/>
    <property type="evidence" value="ECO:0007669"/>
    <property type="project" value="InterPro"/>
</dbReference>
<dbReference type="GO" id="GO:0006412">
    <property type="term" value="P:translation"/>
    <property type="evidence" value="ECO:0007669"/>
    <property type="project" value="UniProtKB-UniRule"/>
</dbReference>
<dbReference type="FunFam" id="1.20.58.110:FF:000001">
    <property type="entry name" value="30S ribosomal protein S20"/>
    <property type="match status" value="1"/>
</dbReference>
<dbReference type="Gene3D" id="1.20.58.110">
    <property type="entry name" value="Ribosomal protein S20"/>
    <property type="match status" value="1"/>
</dbReference>
<dbReference type="HAMAP" id="MF_00500">
    <property type="entry name" value="Ribosomal_bS20"/>
    <property type="match status" value="1"/>
</dbReference>
<dbReference type="InterPro" id="IPR002583">
    <property type="entry name" value="Ribosomal_bS20"/>
</dbReference>
<dbReference type="InterPro" id="IPR036510">
    <property type="entry name" value="Ribosomal_bS20_sf"/>
</dbReference>
<dbReference type="NCBIfam" id="TIGR00029">
    <property type="entry name" value="S20"/>
    <property type="match status" value="1"/>
</dbReference>
<dbReference type="PANTHER" id="PTHR33398">
    <property type="entry name" value="30S RIBOSOMAL PROTEIN S20"/>
    <property type="match status" value="1"/>
</dbReference>
<dbReference type="PANTHER" id="PTHR33398:SF1">
    <property type="entry name" value="SMALL RIBOSOMAL SUBUNIT PROTEIN BS20C"/>
    <property type="match status" value="1"/>
</dbReference>
<dbReference type="Pfam" id="PF01649">
    <property type="entry name" value="Ribosomal_S20p"/>
    <property type="match status" value="1"/>
</dbReference>
<dbReference type="SUPFAM" id="SSF46992">
    <property type="entry name" value="Ribosomal protein S20"/>
    <property type="match status" value="1"/>
</dbReference>